<organism>
    <name type="scientific">Aspergillus terreus</name>
    <dbReference type="NCBI Taxonomy" id="33178"/>
    <lineage>
        <taxon>Eukaryota</taxon>
        <taxon>Fungi</taxon>
        <taxon>Dikarya</taxon>
        <taxon>Ascomycota</taxon>
        <taxon>Pezizomycotina</taxon>
        <taxon>Eurotiomycetes</taxon>
        <taxon>Eurotiomycetidae</taxon>
        <taxon>Eurotiales</taxon>
        <taxon>Aspergillaceae</taxon>
        <taxon>Aspergillus</taxon>
        <taxon>Aspergillus subgen. Circumdati</taxon>
    </lineage>
</organism>
<gene>
    <name evidence="6" type="primary">pgmG</name>
</gene>
<sequence length="560" mass="60319">MSETVTQTETDQRPATARSLGAEEKEAKSDEQFQQERTIKGFRWFIVIISILSSVTLYSLDNTIVADIQPQIINTFDELDKLPWLSVAFLVACVATNSIWSKIYSQLNAKWLYLFCVVLFEVGSAMCGAAPTINTLIGGRALAGLGGAGLYVGVMTLLSVNTTKRERPMYIGMTGLTWGVGTVLGPIVGGGFAVSKVGWRWSFYINLFFAAVAIPIYLFMLPSFDPRPGVSYKERLAQLDYLGTILMIGACVSGVMAINFGGQIYPWDSGQTISCFVVSGVLFIVFGLQQWYCIGTTKENRTFPCQFLARPAFIILFVQTASVATVFFVPIYFVPLFFQFTRNDSAIDAGVRLLPLVCFIVAAMILNGALMSKFGYYMPWYLVGGCLSLVGSVLMYTIKLGTSTANIYGYMIILGVGGGMYAQASFAVAQGKARPREIPVATGFISLAQLTGGTIALAIANSVFLEKASAGIMAVVPDASKETVQSAISGASSSFFQTLDPDVREAVLAAVTHAISQVYILPITGAAMSISLAIFMPREKLFVASDTGDRDGVTPLGAMG</sequence>
<name>PGMG_ASPTE</name>
<reference key="1">
    <citation type="journal article" date="2017" name="Microorganisms">
        <title>Melanisation of Aspergillus terreus-is butyrolactone I involved in the regulation of both DOPA and DHN types of pigments in submerged culture?</title>
        <authorList>
            <person name="Palonen E.K."/>
            <person name="Raina S."/>
            <person name="Brandt A."/>
            <person name="Meriluoto J."/>
            <person name="Keshavarz T."/>
            <person name="Soini J.T."/>
        </authorList>
    </citation>
    <scope>NUCLEOTIDE SEQUENCE [GENOMIC DNA]</scope>
    <scope>IDENTIFICATION</scope>
    <scope>FUNCTION</scope>
    <source>
        <strain>MUCL38669</strain>
    </source>
</reference>
<reference key="2">
    <citation type="journal article" date="2022" name="Fungal Genet. Biol.">
        <title>Identification of a polyketide biosynthesis gene cluster by transcriptional regulator activation in Aspergillus terreus.</title>
        <authorList>
            <person name="Tang S."/>
            <person name="Men P."/>
            <person name="Zhang W."/>
            <person name="Li H."/>
            <person name="Li Z."/>
            <person name="Huang X."/>
            <person name="Lu X."/>
        </authorList>
    </citation>
    <scope>FUNCTION</scope>
    <scope>INDUCTION</scope>
    <scope>DISRUPTION PHENOTYPE</scope>
</reference>
<accession>A0A1W5SP56</accession>
<feature type="chain" id="PRO_0000456013" description="MFS-type transporter pgmG">
    <location>
        <begin position="1"/>
        <end position="560"/>
    </location>
</feature>
<feature type="transmembrane region" description="Helical" evidence="1">
    <location>
        <begin position="45"/>
        <end position="65"/>
    </location>
</feature>
<feature type="transmembrane region" description="Helical" evidence="1">
    <location>
        <begin position="84"/>
        <end position="104"/>
    </location>
</feature>
<feature type="transmembrane region" description="Helical" evidence="1">
    <location>
        <begin position="111"/>
        <end position="131"/>
    </location>
</feature>
<feature type="transmembrane region" description="Helical" evidence="1">
    <location>
        <begin position="141"/>
        <end position="161"/>
    </location>
</feature>
<feature type="transmembrane region" description="Helical" evidence="1">
    <location>
        <begin position="174"/>
        <end position="194"/>
    </location>
</feature>
<feature type="transmembrane region" description="Helical" evidence="1">
    <location>
        <begin position="201"/>
        <end position="221"/>
    </location>
</feature>
<feature type="transmembrane region" description="Helical" evidence="1">
    <location>
        <begin position="242"/>
        <end position="262"/>
    </location>
</feature>
<feature type="transmembrane region" description="Helical" evidence="1">
    <location>
        <begin position="275"/>
        <end position="295"/>
    </location>
</feature>
<feature type="transmembrane region" description="Helical" evidence="1">
    <location>
        <begin position="313"/>
        <end position="333"/>
    </location>
</feature>
<feature type="transmembrane region" description="Helical" evidence="1">
    <location>
        <begin position="346"/>
        <end position="366"/>
    </location>
</feature>
<feature type="transmembrane region" description="Helical" evidence="1">
    <location>
        <begin position="378"/>
        <end position="398"/>
    </location>
</feature>
<feature type="transmembrane region" description="Helical" evidence="1">
    <location>
        <begin position="409"/>
        <end position="429"/>
    </location>
</feature>
<feature type="transmembrane region" description="Helical" evidence="1">
    <location>
        <begin position="440"/>
        <end position="460"/>
    </location>
</feature>
<feature type="transmembrane region" description="Helical" evidence="1">
    <location>
        <begin position="515"/>
        <end position="535"/>
    </location>
</feature>
<feature type="region of interest" description="Disordered" evidence="3">
    <location>
        <begin position="1"/>
        <end position="32"/>
    </location>
</feature>
<feature type="compositionally biased region" description="Basic and acidic residues" evidence="3">
    <location>
        <begin position="21"/>
        <end position="31"/>
    </location>
</feature>
<feature type="glycosylation site" description="N-linked (GlcNAc...) asparagine" evidence="2">
    <location>
        <position position="300"/>
    </location>
</feature>
<feature type="glycosylation site" description="N-linked (GlcNAc...) asparagine" evidence="2">
    <location>
        <position position="343"/>
    </location>
</feature>
<protein>
    <recommendedName>
        <fullName evidence="7">MFS-type transporter pgmG</fullName>
    </recommendedName>
    <alternativeName>
        <fullName evidence="7">Pigmented naphthoquinones biosynthesis cluster protein G</fullName>
    </alternativeName>
</protein>
<keyword id="KW-0325">Glycoprotein</keyword>
<keyword id="KW-0472">Membrane</keyword>
<keyword id="KW-0812">Transmembrane</keyword>
<keyword id="KW-1133">Transmembrane helix</keyword>
<keyword id="KW-0813">Transport</keyword>
<dbReference type="EMBL" id="KX470751">
    <property type="protein sequence ID" value="ARB51368.1"/>
    <property type="molecule type" value="mRNA"/>
</dbReference>
<dbReference type="SMR" id="A0A1W5SP56"/>
<dbReference type="GlyCosmos" id="A0A1W5SP56">
    <property type="glycosylation" value="2 sites, No reported glycans"/>
</dbReference>
<dbReference type="VEuPathDB" id="FungiDB:ATEG_06210"/>
<dbReference type="GO" id="GO:0005886">
    <property type="term" value="C:plasma membrane"/>
    <property type="evidence" value="ECO:0007669"/>
    <property type="project" value="TreeGrafter"/>
</dbReference>
<dbReference type="GO" id="GO:0022857">
    <property type="term" value="F:transmembrane transporter activity"/>
    <property type="evidence" value="ECO:0007669"/>
    <property type="project" value="InterPro"/>
</dbReference>
<dbReference type="FunFam" id="1.20.1250.20:FF:000429">
    <property type="entry name" value="MFS drug efflux transporter, putative"/>
    <property type="match status" value="1"/>
</dbReference>
<dbReference type="Gene3D" id="1.20.1250.20">
    <property type="entry name" value="MFS general substrate transporter like domains"/>
    <property type="match status" value="1"/>
</dbReference>
<dbReference type="InterPro" id="IPR011701">
    <property type="entry name" value="MFS"/>
</dbReference>
<dbReference type="InterPro" id="IPR020846">
    <property type="entry name" value="MFS_dom"/>
</dbReference>
<dbReference type="InterPro" id="IPR036259">
    <property type="entry name" value="MFS_trans_sf"/>
</dbReference>
<dbReference type="PANTHER" id="PTHR23501">
    <property type="entry name" value="MAJOR FACILITATOR SUPERFAMILY"/>
    <property type="match status" value="1"/>
</dbReference>
<dbReference type="PANTHER" id="PTHR23501:SF12">
    <property type="entry name" value="MAJOR FACILITATOR SUPERFAMILY (MFS) PROFILE DOMAIN-CONTAINING PROTEIN-RELATED"/>
    <property type="match status" value="1"/>
</dbReference>
<dbReference type="Pfam" id="PF07690">
    <property type="entry name" value="MFS_1"/>
    <property type="match status" value="1"/>
</dbReference>
<dbReference type="SUPFAM" id="SSF103473">
    <property type="entry name" value="MFS general substrate transporter"/>
    <property type="match status" value="1"/>
</dbReference>
<dbReference type="PROSITE" id="PS50850">
    <property type="entry name" value="MFS"/>
    <property type="match status" value="1"/>
</dbReference>
<comment type="function">
    <text evidence="4 5">MFS-type transporter; part of the gene cluster that mediates the biosynthesis of pleosporalin A, ascomycone A, as well as a third cryptic naphthoquinone derived pigment, all responsible for the coloration of conidia (PubMed:28471414, PubMed:35351612). Seems not to be involved in pigment biosynthesis although its expression is regulated by the cluster-specific transcription factor pgmR (PubMed:35351612).</text>
</comment>
<comment type="subcellular location">
    <subcellularLocation>
        <location evidence="1">Membrane</location>
        <topology evidence="1">Multi-pass membrane protein</topology>
    </subcellularLocation>
</comment>
<comment type="induction">
    <text evidence="5">Expression is positively regulated by the pgm cluster-specific transcription factor pgmR.</text>
</comment>
<comment type="disruption phenotype">
    <text evidence="5">Does not affect the production of the naphthoquinones derived pigments.</text>
</comment>
<comment type="similarity">
    <text evidence="8">Belongs to the major facilitator superfamily. TCR/Tet family.</text>
</comment>
<proteinExistence type="evidence at transcript level"/>
<evidence type="ECO:0000255" key="1"/>
<evidence type="ECO:0000255" key="2">
    <source>
        <dbReference type="PROSITE-ProRule" id="PRU00498"/>
    </source>
</evidence>
<evidence type="ECO:0000256" key="3">
    <source>
        <dbReference type="SAM" id="MobiDB-lite"/>
    </source>
</evidence>
<evidence type="ECO:0000269" key="4">
    <source>
    </source>
</evidence>
<evidence type="ECO:0000269" key="5">
    <source>
    </source>
</evidence>
<evidence type="ECO:0000303" key="6">
    <source>
    </source>
</evidence>
<evidence type="ECO:0000303" key="7">
    <source>
    </source>
</evidence>
<evidence type="ECO:0000305" key="8"/>